<accession>B1IVB9</accession>
<evidence type="ECO:0000255" key="1">
    <source>
        <dbReference type="HAMAP-Rule" id="MF_00082"/>
    </source>
</evidence>
<protein>
    <recommendedName>
        <fullName evidence="1">Acetylglutamate kinase</fullName>
        <ecNumber evidence="1">2.7.2.8</ecNumber>
    </recommendedName>
    <alternativeName>
        <fullName evidence="1">N-acetyl-L-glutamate 5-phosphotransferase</fullName>
    </alternativeName>
    <alternativeName>
        <fullName evidence="1">NAG kinase</fullName>
        <shortName evidence="1">NAGK</shortName>
    </alternativeName>
</protein>
<reference key="1">
    <citation type="submission" date="2008-02" db="EMBL/GenBank/DDBJ databases">
        <title>Complete sequence of Escherichia coli C str. ATCC 8739.</title>
        <authorList>
            <person name="Copeland A."/>
            <person name="Lucas S."/>
            <person name="Lapidus A."/>
            <person name="Glavina del Rio T."/>
            <person name="Dalin E."/>
            <person name="Tice H."/>
            <person name="Bruce D."/>
            <person name="Goodwin L."/>
            <person name="Pitluck S."/>
            <person name="Kiss H."/>
            <person name="Brettin T."/>
            <person name="Detter J.C."/>
            <person name="Han C."/>
            <person name="Kuske C.R."/>
            <person name="Schmutz J."/>
            <person name="Larimer F."/>
            <person name="Land M."/>
            <person name="Hauser L."/>
            <person name="Kyrpides N."/>
            <person name="Mikhailova N."/>
            <person name="Ingram L."/>
            <person name="Richardson P."/>
        </authorList>
    </citation>
    <scope>NUCLEOTIDE SEQUENCE [LARGE SCALE GENOMIC DNA]</scope>
    <source>
        <strain>ATCC 8739 / DSM 1576 / NBRC 3972 / NCIMB 8545 / WDCM 00012 / Crooks</strain>
    </source>
</reference>
<proteinExistence type="inferred from homology"/>
<dbReference type="EC" id="2.7.2.8" evidence="1"/>
<dbReference type="EMBL" id="CP000946">
    <property type="protein sequence ID" value="ACA79656.1"/>
    <property type="molecule type" value="Genomic_DNA"/>
</dbReference>
<dbReference type="SMR" id="B1IVB9"/>
<dbReference type="KEGG" id="ecl:EcolC_4057"/>
<dbReference type="HOGENOM" id="CLU_053680_1_1_6"/>
<dbReference type="UniPathway" id="UPA00068">
    <property type="reaction ID" value="UER00107"/>
</dbReference>
<dbReference type="GO" id="GO:0005737">
    <property type="term" value="C:cytoplasm"/>
    <property type="evidence" value="ECO:0007669"/>
    <property type="project" value="UniProtKB-SubCell"/>
</dbReference>
<dbReference type="GO" id="GO:0003991">
    <property type="term" value="F:acetylglutamate kinase activity"/>
    <property type="evidence" value="ECO:0007669"/>
    <property type="project" value="UniProtKB-UniRule"/>
</dbReference>
<dbReference type="GO" id="GO:0005524">
    <property type="term" value="F:ATP binding"/>
    <property type="evidence" value="ECO:0007669"/>
    <property type="project" value="UniProtKB-UniRule"/>
</dbReference>
<dbReference type="GO" id="GO:0042450">
    <property type="term" value="P:arginine biosynthetic process via ornithine"/>
    <property type="evidence" value="ECO:0007669"/>
    <property type="project" value="UniProtKB-UniRule"/>
</dbReference>
<dbReference type="GO" id="GO:0006526">
    <property type="term" value="P:L-arginine biosynthetic process"/>
    <property type="evidence" value="ECO:0007669"/>
    <property type="project" value="UniProtKB-UniPathway"/>
</dbReference>
<dbReference type="CDD" id="cd04249">
    <property type="entry name" value="AAK_NAGK-NC"/>
    <property type="match status" value="1"/>
</dbReference>
<dbReference type="FunFam" id="3.40.1160.10:FF:000008">
    <property type="entry name" value="Acetylglutamate kinase"/>
    <property type="match status" value="1"/>
</dbReference>
<dbReference type="Gene3D" id="3.40.1160.10">
    <property type="entry name" value="Acetylglutamate kinase-like"/>
    <property type="match status" value="1"/>
</dbReference>
<dbReference type="HAMAP" id="MF_00082">
    <property type="entry name" value="ArgB"/>
    <property type="match status" value="1"/>
</dbReference>
<dbReference type="InterPro" id="IPR036393">
    <property type="entry name" value="AceGlu_kinase-like_sf"/>
</dbReference>
<dbReference type="InterPro" id="IPR004662">
    <property type="entry name" value="AcgluKinase_fam"/>
</dbReference>
<dbReference type="InterPro" id="IPR037528">
    <property type="entry name" value="ArgB"/>
</dbReference>
<dbReference type="InterPro" id="IPR001048">
    <property type="entry name" value="Asp/Glu/Uridylate_kinase"/>
</dbReference>
<dbReference type="InterPro" id="IPR041731">
    <property type="entry name" value="NAGK-NC"/>
</dbReference>
<dbReference type="NCBIfam" id="TIGR00761">
    <property type="entry name" value="argB"/>
    <property type="match status" value="1"/>
</dbReference>
<dbReference type="PANTHER" id="PTHR23342">
    <property type="entry name" value="N-ACETYLGLUTAMATE SYNTHASE"/>
    <property type="match status" value="1"/>
</dbReference>
<dbReference type="PANTHER" id="PTHR23342:SF0">
    <property type="entry name" value="N-ACETYLGLUTAMATE SYNTHASE, MITOCHONDRIAL"/>
    <property type="match status" value="1"/>
</dbReference>
<dbReference type="Pfam" id="PF00696">
    <property type="entry name" value="AA_kinase"/>
    <property type="match status" value="1"/>
</dbReference>
<dbReference type="PIRSF" id="PIRSF000728">
    <property type="entry name" value="NAGK"/>
    <property type="match status" value="1"/>
</dbReference>
<dbReference type="SUPFAM" id="SSF53633">
    <property type="entry name" value="Carbamate kinase-like"/>
    <property type="match status" value="1"/>
</dbReference>
<organism>
    <name type="scientific">Escherichia coli (strain ATCC 8739 / DSM 1576 / NBRC 3972 / NCIMB 8545 / WDCM 00012 / Crooks)</name>
    <dbReference type="NCBI Taxonomy" id="481805"/>
    <lineage>
        <taxon>Bacteria</taxon>
        <taxon>Pseudomonadati</taxon>
        <taxon>Pseudomonadota</taxon>
        <taxon>Gammaproteobacteria</taxon>
        <taxon>Enterobacterales</taxon>
        <taxon>Enterobacteriaceae</taxon>
        <taxon>Escherichia</taxon>
    </lineage>
</organism>
<comment type="function">
    <text evidence="1">Catalyzes the ATP-dependent phosphorylation of N-acetyl-L-glutamate.</text>
</comment>
<comment type="catalytic activity">
    <reaction evidence="1">
        <text>N-acetyl-L-glutamate + ATP = N-acetyl-L-glutamyl 5-phosphate + ADP</text>
        <dbReference type="Rhea" id="RHEA:14629"/>
        <dbReference type="ChEBI" id="CHEBI:30616"/>
        <dbReference type="ChEBI" id="CHEBI:44337"/>
        <dbReference type="ChEBI" id="CHEBI:57936"/>
        <dbReference type="ChEBI" id="CHEBI:456216"/>
        <dbReference type="EC" id="2.7.2.8"/>
    </reaction>
</comment>
<comment type="pathway">
    <text evidence="1">Amino-acid biosynthesis; L-arginine biosynthesis; N(2)-acetyl-L-ornithine from L-glutamate: step 2/4.</text>
</comment>
<comment type="subunit">
    <text evidence="1">Homodimer.</text>
</comment>
<comment type="subcellular location">
    <subcellularLocation>
        <location evidence="1">Cytoplasm</location>
    </subcellularLocation>
</comment>
<comment type="similarity">
    <text evidence="1">Belongs to the acetylglutamate kinase family. ArgB subfamily.</text>
</comment>
<gene>
    <name evidence="1" type="primary">argB</name>
    <name type="ordered locus">EcolC_4057</name>
</gene>
<feature type="chain" id="PRO_0000335629" description="Acetylglutamate kinase">
    <location>
        <begin position="1"/>
        <end position="257"/>
    </location>
</feature>
<feature type="binding site" evidence="1">
    <location>
        <begin position="43"/>
        <end position="44"/>
    </location>
    <ligand>
        <name>substrate</name>
    </ligand>
</feature>
<feature type="binding site" evidence="1">
    <location>
        <position position="65"/>
    </location>
    <ligand>
        <name>substrate</name>
    </ligand>
</feature>
<feature type="binding site" evidence="1">
    <location>
        <position position="157"/>
    </location>
    <ligand>
        <name>substrate</name>
    </ligand>
</feature>
<feature type="binding site" evidence="1">
    <location>
        <begin position="180"/>
        <end position="185"/>
    </location>
    <ligand>
        <name>ATP</name>
        <dbReference type="ChEBI" id="CHEBI:30616"/>
    </ligand>
</feature>
<feature type="binding site" evidence="1">
    <location>
        <begin position="208"/>
        <end position="210"/>
    </location>
    <ligand>
        <name>ATP</name>
        <dbReference type="ChEBI" id="CHEBI:30616"/>
    </ligand>
</feature>
<feature type="site" description="Transition state stabilizer" evidence="1">
    <location>
        <position position="7"/>
    </location>
</feature>
<feature type="site" description="Transition state stabilizer" evidence="1">
    <location>
        <position position="216"/>
    </location>
</feature>
<keyword id="KW-0028">Amino-acid biosynthesis</keyword>
<keyword id="KW-0055">Arginine biosynthesis</keyword>
<keyword id="KW-0067">ATP-binding</keyword>
<keyword id="KW-0963">Cytoplasm</keyword>
<keyword id="KW-0418">Kinase</keyword>
<keyword id="KW-0547">Nucleotide-binding</keyword>
<keyword id="KW-0808">Transferase</keyword>
<name>ARGB_ECOLC</name>
<sequence length="257" mass="27028">MNPLIIKLGGVLLDSEEALERLFSALVNYRESHQRPLVIVHGGGCVVDELMKGLNLPVKKKNGLRVTPADQIDIITGALAGTANKTLLAWAKKHQIAAVGLFLGDGDSVKVTQLDEELGHVGLAQPGSPKLINSLLENGYLPVVSSIGVTDEGQLMNVNADQAATALAATLGADLILLSDVSGILDGKGQRIAEMTAAKAEQLIEQGIITDGMIVKVNAALDAARTLGRPVDIASWRHAEQLPALFNGMPMGTRILA</sequence>